<organism>
    <name type="scientific">Bacillus cereus (strain ATCC 10987 / NRS 248)</name>
    <dbReference type="NCBI Taxonomy" id="222523"/>
    <lineage>
        <taxon>Bacteria</taxon>
        <taxon>Bacillati</taxon>
        <taxon>Bacillota</taxon>
        <taxon>Bacilli</taxon>
        <taxon>Bacillales</taxon>
        <taxon>Bacillaceae</taxon>
        <taxon>Bacillus</taxon>
        <taxon>Bacillus cereus group</taxon>
    </lineage>
</organism>
<name>CCA_BACC1</name>
<dbReference type="EC" id="2.7.7.72" evidence="1"/>
<dbReference type="EMBL" id="AE017194">
    <property type="protein sequence ID" value="AAS40594.1"/>
    <property type="molecule type" value="Genomic_DNA"/>
</dbReference>
<dbReference type="SMR" id="Q73AV7"/>
<dbReference type="KEGG" id="bca:BCE_1665"/>
<dbReference type="HOGENOM" id="CLU_015961_3_0_9"/>
<dbReference type="Proteomes" id="UP000002527">
    <property type="component" value="Chromosome"/>
</dbReference>
<dbReference type="GO" id="GO:0005524">
    <property type="term" value="F:ATP binding"/>
    <property type="evidence" value="ECO:0007669"/>
    <property type="project" value="UniProtKB-UniRule"/>
</dbReference>
<dbReference type="GO" id="GO:0004810">
    <property type="term" value="F:CCA tRNA nucleotidyltransferase activity"/>
    <property type="evidence" value="ECO:0007669"/>
    <property type="project" value="UniProtKB-UniRule"/>
</dbReference>
<dbReference type="GO" id="GO:0000287">
    <property type="term" value="F:magnesium ion binding"/>
    <property type="evidence" value="ECO:0007669"/>
    <property type="project" value="UniProtKB-UniRule"/>
</dbReference>
<dbReference type="GO" id="GO:0000049">
    <property type="term" value="F:tRNA binding"/>
    <property type="evidence" value="ECO:0007669"/>
    <property type="project" value="UniProtKB-UniRule"/>
</dbReference>
<dbReference type="GO" id="GO:0042245">
    <property type="term" value="P:RNA repair"/>
    <property type="evidence" value="ECO:0007669"/>
    <property type="project" value="UniProtKB-KW"/>
</dbReference>
<dbReference type="GO" id="GO:0001680">
    <property type="term" value="P:tRNA 3'-terminal CCA addition"/>
    <property type="evidence" value="ECO:0007669"/>
    <property type="project" value="UniProtKB-UniRule"/>
</dbReference>
<dbReference type="CDD" id="cd05398">
    <property type="entry name" value="NT_ClassII-CCAase"/>
    <property type="match status" value="1"/>
</dbReference>
<dbReference type="Gene3D" id="1.10.110.30">
    <property type="match status" value="1"/>
</dbReference>
<dbReference type="Gene3D" id="1.10.246.80">
    <property type="match status" value="1"/>
</dbReference>
<dbReference type="Gene3D" id="1.20.58.560">
    <property type="match status" value="1"/>
</dbReference>
<dbReference type="Gene3D" id="3.30.460.10">
    <property type="entry name" value="Beta Polymerase, domain 2"/>
    <property type="match status" value="1"/>
</dbReference>
<dbReference type="HAMAP" id="MF_01263">
    <property type="entry name" value="CCA_bact_type3"/>
    <property type="match status" value="1"/>
</dbReference>
<dbReference type="InterPro" id="IPR050264">
    <property type="entry name" value="Bact_CCA-adding_enz_type3_sf"/>
</dbReference>
<dbReference type="InterPro" id="IPR032810">
    <property type="entry name" value="CCA-adding_enz_C"/>
</dbReference>
<dbReference type="InterPro" id="IPR023068">
    <property type="entry name" value="CCA-adding_enz_firmicutes"/>
</dbReference>
<dbReference type="InterPro" id="IPR043519">
    <property type="entry name" value="NT_sf"/>
</dbReference>
<dbReference type="InterPro" id="IPR002646">
    <property type="entry name" value="PolA_pol_head_dom"/>
</dbReference>
<dbReference type="InterPro" id="IPR032828">
    <property type="entry name" value="PolyA_RNA-bd"/>
</dbReference>
<dbReference type="NCBIfam" id="NF009814">
    <property type="entry name" value="PRK13299.1"/>
    <property type="match status" value="1"/>
</dbReference>
<dbReference type="PANTHER" id="PTHR46173">
    <property type="entry name" value="CCA TRNA NUCLEOTIDYLTRANSFERASE 1, MITOCHONDRIAL"/>
    <property type="match status" value="1"/>
</dbReference>
<dbReference type="PANTHER" id="PTHR46173:SF1">
    <property type="entry name" value="CCA TRNA NUCLEOTIDYLTRANSFERASE 1, MITOCHONDRIAL"/>
    <property type="match status" value="1"/>
</dbReference>
<dbReference type="Pfam" id="PF01743">
    <property type="entry name" value="PolyA_pol"/>
    <property type="match status" value="1"/>
</dbReference>
<dbReference type="Pfam" id="PF12627">
    <property type="entry name" value="PolyA_pol_RNAbd"/>
    <property type="match status" value="1"/>
</dbReference>
<dbReference type="Pfam" id="PF13735">
    <property type="entry name" value="tRNA_NucTran2_2"/>
    <property type="match status" value="1"/>
</dbReference>
<dbReference type="SUPFAM" id="SSF81301">
    <property type="entry name" value="Nucleotidyltransferase"/>
    <property type="match status" value="1"/>
</dbReference>
<dbReference type="SUPFAM" id="SSF81891">
    <property type="entry name" value="Poly A polymerase C-terminal region-like"/>
    <property type="match status" value="1"/>
</dbReference>
<keyword id="KW-0067">ATP-binding</keyword>
<keyword id="KW-0460">Magnesium</keyword>
<keyword id="KW-0479">Metal-binding</keyword>
<keyword id="KW-0547">Nucleotide-binding</keyword>
<keyword id="KW-0548">Nucleotidyltransferase</keyword>
<keyword id="KW-0692">RNA repair</keyword>
<keyword id="KW-0694">RNA-binding</keyword>
<keyword id="KW-0808">Transferase</keyword>
<keyword id="KW-0819">tRNA processing</keyword>
<proteinExistence type="inferred from homology"/>
<feature type="chain" id="PRO_0000139026" description="CCA-adding enzyme">
    <location>
        <begin position="1"/>
        <end position="397"/>
    </location>
</feature>
<feature type="binding site" evidence="1">
    <location>
        <position position="26"/>
    </location>
    <ligand>
        <name>ATP</name>
        <dbReference type="ChEBI" id="CHEBI:30616"/>
    </ligand>
</feature>
<feature type="binding site" evidence="1">
    <location>
        <position position="26"/>
    </location>
    <ligand>
        <name>CTP</name>
        <dbReference type="ChEBI" id="CHEBI:37563"/>
    </ligand>
</feature>
<feature type="binding site" evidence="1">
    <location>
        <position position="29"/>
    </location>
    <ligand>
        <name>ATP</name>
        <dbReference type="ChEBI" id="CHEBI:30616"/>
    </ligand>
</feature>
<feature type="binding site" evidence="1">
    <location>
        <position position="29"/>
    </location>
    <ligand>
        <name>CTP</name>
        <dbReference type="ChEBI" id="CHEBI:37563"/>
    </ligand>
</feature>
<feature type="binding site" evidence="1">
    <location>
        <position position="39"/>
    </location>
    <ligand>
        <name>Mg(2+)</name>
        <dbReference type="ChEBI" id="CHEBI:18420"/>
    </ligand>
</feature>
<feature type="binding site" evidence="1">
    <location>
        <position position="41"/>
    </location>
    <ligand>
        <name>Mg(2+)</name>
        <dbReference type="ChEBI" id="CHEBI:18420"/>
    </ligand>
</feature>
<feature type="binding site" evidence="1">
    <location>
        <position position="110"/>
    </location>
    <ligand>
        <name>ATP</name>
        <dbReference type="ChEBI" id="CHEBI:30616"/>
    </ligand>
</feature>
<feature type="binding site" evidence="1">
    <location>
        <position position="110"/>
    </location>
    <ligand>
        <name>CTP</name>
        <dbReference type="ChEBI" id="CHEBI:37563"/>
    </ligand>
</feature>
<feature type="binding site" evidence="1">
    <location>
        <position position="153"/>
    </location>
    <ligand>
        <name>ATP</name>
        <dbReference type="ChEBI" id="CHEBI:30616"/>
    </ligand>
</feature>
<feature type="binding site" evidence="1">
    <location>
        <position position="153"/>
    </location>
    <ligand>
        <name>CTP</name>
        <dbReference type="ChEBI" id="CHEBI:37563"/>
    </ligand>
</feature>
<feature type="binding site" evidence="1">
    <location>
        <position position="156"/>
    </location>
    <ligand>
        <name>ATP</name>
        <dbReference type="ChEBI" id="CHEBI:30616"/>
    </ligand>
</feature>
<feature type="binding site" evidence="1">
    <location>
        <position position="156"/>
    </location>
    <ligand>
        <name>CTP</name>
        <dbReference type="ChEBI" id="CHEBI:37563"/>
    </ligand>
</feature>
<feature type="binding site" evidence="1">
    <location>
        <position position="159"/>
    </location>
    <ligand>
        <name>ATP</name>
        <dbReference type="ChEBI" id="CHEBI:30616"/>
    </ligand>
</feature>
<feature type="binding site" evidence="1">
    <location>
        <position position="159"/>
    </location>
    <ligand>
        <name>CTP</name>
        <dbReference type="ChEBI" id="CHEBI:37563"/>
    </ligand>
</feature>
<feature type="binding site" evidence="1">
    <location>
        <position position="162"/>
    </location>
    <ligand>
        <name>ATP</name>
        <dbReference type="ChEBI" id="CHEBI:30616"/>
    </ligand>
</feature>
<feature type="binding site" evidence="1">
    <location>
        <position position="162"/>
    </location>
    <ligand>
        <name>CTP</name>
        <dbReference type="ChEBI" id="CHEBI:37563"/>
    </ligand>
</feature>
<accession>Q73AV7</accession>
<sequence>MKRFKKASSIIETLKQQGHEAYFVGGSVRDLIIDRPIGDIDIATSALPEEVMAIFPRHVPVGLEHGTVIVVENGEPYEVTTFRTESEYEDFRRPSSVQFVRSLEEDLKRRDFTMNAIAMTEEGEMVDLFAGQEAIQKREIVTVGNAADRFQEDALRMMRGIRFVSTLGFSLETKTKQAIETYGHLLEHIAIERITVEFEKLLTGTYCVKALKELVETKLFSHLPYLQMSEERLLKATQYNWDSFETDIEAWAFFLYCIGEEHPAVFLRQWKFSNKKIKDIVAVLLTVRKRKEKDWDTVLLYKTGIHIAEMAERVYEAMIESYDHTSVKRVQTLFQALPIKNRQEMNVTGNDLLNWASKKPGPWVAEMIQKIEEAIVQGNVVNEKECIREWLQECNLL</sequence>
<gene>
    <name evidence="1" type="primary">cca</name>
    <name type="ordered locus">BCE_1665</name>
</gene>
<protein>
    <recommendedName>
        <fullName evidence="1">CCA-adding enzyme</fullName>
        <ecNumber evidence="1">2.7.7.72</ecNumber>
    </recommendedName>
    <alternativeName>
        <fullName evidence="1">CCA tRNA nucleotidyltransferase</fullName>
    </alternativeName>
    <alternativeName>
        <fullName evidence="1">tRNA CCA-pyrophosphorylase</fullName>
    </alternativeName>
    <alternativeName>
        <fullName evidence="1">tRNA adenylyl-/cytidylyl- transferase</fullName>
    </alternativeName>
    <alternativeName>
        <fullName evidence="1">tRNA nucleotidyltransferase</fullName>
    </alternativeName>
    <alternativeName>
        <fullName evidence="1">tRNA-NT</fullName>
    </alternativeName>
</protein>
<comment type="function">
    <text evidence="1">Catalyzes the addition and repair of the essential 3'-terminal CCA sequence in tRNAs without using a nucleic acid template. Adds these three nucleotides in the order of C, C, and A to the tRNA nucleotide-73, using CTP and ATP as substrates and producing inorganic pyrophosphate. tRNA 3'-terminal CCA addition is required both for tRNA processing and repair. Also involved in tRNA surveillance by mediating tandem CCA addition to generate a CCACCA at the 3' terminus of unstable tRNAs. While stable tRNAs receive only 3'-terminal CCA, unstable tRNAs are marked with CCACCA and rapidly degraded.</text>
</comment>
<comment type="catalytic activity">
    <reaction evidence="1">
        <text>a tRNA precursor + 2 CTP + ATP = a tRNA with a 3' CCA end + 3 diphosphate</text>
        <dbReference type="Rhea" id="RHEA:14433"/>
        <dbReference type="Rhea" id="RHEA-COMP:10465"/>
        <dbReference type="Rhea" id="RHEA-COMP:10468"/>
        <dbReference type="ChEBI" id="CHEBI:30616"/>
        <dbReference type="ChEBI" id="CHEBI:33019"/>
        <dbReference type="ChEBI" id="CHEBI:37563"/>
        <dbReference type="ChEBI" id="CHEBI:74896"/>
        <dbReference type="ChEBI" id="CHEBI:83071"/>
        <dbReference type="EC" id="2.7.7.72"/>
    </reaction>
</comment>
<comment type="catalytic activity">
    <reaction evidence="1">
        <text>a tRNA with a 3' CCA end + 2 CTP + ATP = a tRNA with a 3' CCACCA end + 3 diphosphate</text>
        <dbReference type="Rhea" id="RHEA:76235"/>
        <dbReference type="Rhea" id="RHEA-COMP:10468"/>
        <dbReference type="Rhea" id="RHEA-COMP:18655"/>
        <dbReference type="ChEBI" id="CHEBI:30616"/>
        <dbReference type="ChEBI" id="CHEBI:33019"/>
        <dbReference type="ChEBI" id="CHEBI:37563"/>
        <dbReference type="ChEBI" id="CHEBI:83071"/>
        <dbReference type="ChEBI" id="CHEBI:195187"/>
    </reaction>
    <physiologicalReaction direction="left-to-right" evidence="1">
        <dbReference type="Rhea" id="RHEA:76236"/>
    </physiologicalReaction>
</comment>
<comment type="cofactor">
    <cofactor evidence="1">
        <name>Mg(2+)</name>
        <dbReference type="ChEBI" id="CHEBI:18420"/>
    </cofactor>
</comment>
<comment type="subunit">
    <text evidence="1">Homodimer.</text>
</comment>
<comment type="miscellaneous">
    <text evidence="1">A single active site specifically recognizes both ATP and CTP and is responsible for their addition.</text>
</comment>
<comment type="similarity">
    <text evidence="1">Belongs to the tRNA nucleotidyltransferase/poly(A) polymerase family. Bacterial CCA-adding enzyme type 3 subfamily.</text>
</comment>
<reference key="1">
    <citation type="journal article" date="2004" name="Nucleic Acids Res.">
        <title>The genome sequence of Bacillus cereus ATCC 10987 reveals metabolic adaptations and a large plasmid related to Bacillus anthracis pXO1.</title>
        <authorList>
            <person name="Rasko D.A."/>
            <person name="Ravel J."/>
            <person name="Oekstad O.A."/>
            <person name="Helgason E."/>
            <person name="Cer R.Z."/>
            <person name="Jiang L."/>
            <person name="Shores K.A."/>
            <person name="Fouts D.E."/>
            <person name="Tourasse N.J."/>
            <person name="Angiuoli S.V."/>
            <person name="Kolonay J.F."/>
            <person name="Nelson W.C."/>
            <person name="Kolstoe A.-B."/>
            <person name="Fraser C.M."/>
            <person name="Read T.D."/>
        </authorList>
    </citation>
    <scope>NUCLEOTIDE SEQUENCE [LARGE SCALE GENOMIC DNA]</scope>
    <source>
        <strain>ATCC 10987 / NRS 248</strain>
    </source>
</reference>
<evidence type="ECO:0000255" key="1">
    <source>
        <dbReference type="HAMAP-Rule" id="MF_01263"/>
    </source>
</evidence>